<comment type="similarity">
    <text evidence="1">Belongs to the bacterial ribosomal protein bL34 family.</text>
</comment>
<organism>
    <name type="scientific">Geobacter metallireducens (strain ATCC 53774 / DSM 7210 / GS-15)</name>
    <dbReference type="NCBI Taxonomy" id="269799"/>
    <lineage>
        <taxon>Bacteria</taxon>
        <taxon>Pseudomonadati</taxon>
        <taxon>Thermodesulfobacteriota</taxon>
        <taxon>Desulfuromonadia</taxon>
        <taxon>Geobacterales</taxon>
        <taxon>Geobacteraceae</taxon>
        <taxon>Geobacter</taxon>
    </lineage>
</organism>
<dbReference type="EMBL" id="CP000148">
    <property type="protein sequence ID" value="ABB33769.1"/>
    <property type="molecule type" value="Genomic_DNA"/>
</dbReference>
<dbReference type="RefSeq" id="WP_004513719.1">
    <property type="nucleotide sequence ID" value="NC_007517.1"/>
</dbReference>
<dbReference type="SMR" id="Q39PQ5"/>
<dbReference type="STRING" id="269799.Gmet_3564"/>
<dbReference type="KEGG" id="gme:Gmet_3564"/>
<dbReference type="eggNOG" id="COG0230">
    <property type="taxonomic scope" value="Bacteria"/>
</dbReference>
<dbReference type="HOGENOM" id="CLU_129938_2_0_7"/>
<dbReference type="Proteomes" id="UP000007073">
    <property type="component" value="Chromosome"/>
</dbReference>
<dbReference type="GO" id="GO:1990904">
    <property type="term" value="C:ribonucleoprotein complex"/>
    <property type="evidence" value="ECO:0007669"/>
    <property type="project" value="UniProtKB-KW"/>
</dbReference>
<dbReference type="GO" id="GO:0005840">
    <property type="term" value="C:ribosome"/>
    <property type="evidence" value="ECO:0007669"/>
    <property type="project" value="UniProtKB-KW"/>
</dbReference>
<dbReference type="GO" id="GO:0003735">
    <property type="term" value="F:structural constituent of ribosome"/>
    <property type="evidence" value="ECO:0007669"/>
    <property type="project" value="InterPro"/>
</dbReference>
<dbReference type="GO" id="GO:0006412">
    <property type="term" value="P:translation"/>
    <property type="evidence" value="ECO:0007669"/>
    <property type="project" value="UniProtKB-UniRule"/>
</dbReference>
<dbReference type="FunFam" id="1.10.287.3980:FF:000001">
    <property type="entry name" value="Mitochondrial ribosomal protein L34"/>
    <property type="match status" value="1"/>
</dbReference>
<dbReference type="Gene3D" id="1.10.287.3980">
    <property type="match status" value="1"/>
</dbReference>
<dbReference type="HAMAP" id="MF_00391">
    <property type="entry name" value="Ribosomal_bL34"/>
    <property type="match status" value="1"/>
</dbReference>
<dbReference type="InterPro" id="IPR000271">
    <property type="entry name" value="Ribosomal_bL34"/>
</dbReference>
<dbReference type="InterPro" id="IPR020939">
    <property type="entry name" value="Ribosomal_bL34_CS"/>
</dbReference>
<dbReference type="NCBIfam" id="TIGR01030">
    <property type="entry name" value="rpmH_bact"/>
    <property type="match status" value="1"/>
</dbReference>
<dbReference type="PANTHER" id="PTHR14503:SF4">
    <property type="entry name" value="LARGE RIBOSOMAL SUBUNIT PROTEIN BL34M"/>
    <property type="match status" value="1"/>
</dbReference>
<dbReference type="PANTHER" id="PTHR14503">
    <property type="entry name" value="MITOCHONDRIAL RIBOSOMAL PROTEIN 34 FAMILY MEMBER"/>
    <property type="match status" value="1"/>
</dbReference>
<dbReference type="Pfam" id="PF00468">
    <property type="entry name" value="Ribosomal_L34"/>
    <property type="match status" value="1"/>
</dbReference>
<dbReference type="PROSITE" id="PS00784">
    <property type="entry name" value="RIBOSOMAL_L34"/>
    <property type="match status" value="1"/>
</dbReference>
<proteinExistence type="inferred from homology"/>
<reference key="1">
    <citation type="journal article" date="2009" name="BMC Microbiol.">
        <title>The genome sequence of Geobacter metallireducens: features of metabolism, physiology and regulation common and dissimilar to Geobacter sulfurreducens.</title>
        <authorList>
            <person name="Aklujkar M."/>
            <person name="Krushkal J."/>
            <person name="DiBartolo G."/>
            <person name="Lapidus A."/>
            <person name="Land M.L."/>
            <person name="Lovley D.R."/>
        </authorList>
    </citation>
    <scope>NUCLEOTIDE SEQUENCE [LARGE SCALE GENOMIC DNA]</scope>
    <source>
        <strain>ATCC 53774 / DSM 7210 / GS-15</strain>
    </source>
</reference>
<sequence>MKRTFQPSNTSRKRTHGFRVRMSTKNGRLVIKRRRARGRKRLAVTIAGK</sequence>
<evidence type="ECO:0000255" key="1">
    <source>
        <dbReference type="HAMAP-Rule" id="MF_00391"/>
    </source>
</evidence>
<evidence type="ECO:0000305" key="2"/>
<accession>Q39PQ5</accession>
<keyword id="KW-1185">Reference proteome</keyword>
<keyword id="KW-0687">Ribonucleoprotein</keyword>
<keyword id="KW-0689">Ribosomal protein</keyword>
<name>RL34_GEOMG</name>
<protein>
    <recommendedName>
        <fullName evidence="1">Large ribosomal subunit protein bL34</fullName>
    </recommendedName>
    <alternativeName>
        <fullName evidence="2">50S ribosomal protein L34</fullName>
    </alternativeName>
</protein>
<gene>
    <name evidence="1" type="primary">rpmH</name>
    <name type="ordered locus">Gmet_3564</name>
</gene>
<feature type="chain" id="PRO_1000013344" description="Large ribosomal subunit protein bL34">
    <location>
        <begin position="1"/>
        <end position="49"/>
    </location>
</feature>